<organism>
    <name type="scientific">Prochlorococcus marinus (strain SARG / CCMP1375 / SS120)</name>
    <dbReference type="NCBI Taxonomy" id="167539"/>
    <lineage>
        <taxon>Bacteria</taxon>
        <taxon>Bacillati</taxon>
        <taxon>Cyanobacteriota</taxon>
        <taxon>Cyanophyceae</taxon>
        <taxon>Synechococcales</taxon>
        <taxon>Prochlorococcaceae</taxon>
        <taxon>Prochlorococcus</taxon>
    </lineage>
</organism>
<name>HEMH_PROMA</name>
<proteinExistence type="inferred from homology"/>
<feature type="chain" id="PRO_0000175180" description="Ferrochelatase">
    <location>
        <begin position="1"/>
        <end position="391"/>
    </location>
</feature>
<feature type="binding site" evidence="1">
    <location>
        <position position="196"/>
    </location>
    <ligand>
        <name>Fe cation</name>
        <dbReference type="ChEBI" id="CHEBI:24875"/>
    </ligand>
</feature>
<feature type="binding site" evidence="1">
    <location>
        <position position="281"/>
    </location>
    <ligand>
        <name>Fe cation</name>
        <dbReference type="ChEBI" id="CHEBI:24875"/>
    </ligand>
</feature>
<dbReference type="EC" id="4.98.1.1" evidence="1"/>
<dbReference type="EMBL" id="AE017126">
    <property type="protein sequence ID" value="AAP99570.1"/>
    <property type="molecule type" value="Genomic_DNA"/>
</dbReference>
<dbReference type="RefSeq" id="NP_874918.1">
    <property type="nucleotide sequence ID" value="NC_005042.1"/>
</dbReference>
<dbReference type="RefSeq" id="WP_011124679.1">
    <property type="nucleotide sequence ID" value="NC_005042.1"/>
</dbReference>
<dbReference type="SMR" id="Q7VD58"/>
<dbReference type="STRING" id="167539.Pro_0525"/>
<dbReference type="EnsemblBacteria" id="AAP99570">
    <property type="protein sequence ID" value="AAP99570"/>
    <property type="gene ID" value="Pro_0525"/>
</dbReference>
<dbReference type="KEGG" id="pma:Pro_0525"/>
<dbReference type="PATRIC" id="fig|167539.5.peg.539"/>
<dbReference type="eggNOG" id="COG0276">
    <property type="taxonomic scope" value="Bacteria"/>
</dbReference>
<dbReference type="HOGENOM" id="CLU_018884_4_3_3"/>
<dbReference type="OrthoDB" id="9809741at2"/>
<dbReference type="UniPathway" id="UPA00252">
    <property type="reaction ID" value="UER00325"/>
</dbReference>
<dbReference type="Proteomes" id="UP000001420">
    <property type="component" value="Chromosome"/>
</dbReference>
<dbReference type="GO" id="GO:0005737">
    <property type="term" value="C:cytoplasm"/>
    <property type="evidence" value="ECO:0007669"/>
    <property type="project" value="UniProtKB-SubCell"/>
</dbReference>
<dbReference type="GO" id="GO:0004325">
    <property type="term" value="F:ferrochelatase activity"/>
    <property type="evidence" value="ECO:0007669"/>
    <property type="project" value="UniProtKB-UniRule"/>
</dbReference>
<dbReference type="GO" id="GO:0046872">
    <property type="term" value="F:metal ion binding"/>
    <property type="evidence" value="ECO:0007669"/>
    <property type="project" value="UniProtKB-KW"/>
</dbReference>
<dbReference type="GO" id="GO:0006783">
    <property type="term" value="P:heme biosynthetic process"/>
    <property type="evidence" value="ECO:0007669"/>
    <property type="project" value="UniProtKB-UniRule"/>
</dbReference>
<dbReference type="CDD" id="cd00419">
    <property type="entry name" value="Ferrochelatase_C"/>
    <property type="match status" value="1"/>
</dbReference>
<dbReference type="CDD" id="cd03411">
    <property type="entry name" value="Ferrochelatase_N"/>
    <property type="match status" value="1"/>
</dbReference>
<dbReference type="FunFam" id="3.40.50.1400:FF:000006">
    <property type="entry name" value="Ferrochelatase"/>
    <property type="match status" value="1"/>
</dbReference>
<dbReference type="Gene3D" id="3.40.50.1400">
    <property type="match status" value="2"/>
</dbReference>
<dbReference type="HAMAP" id="MF_00323">
    <property type="entry name" value="Ferrochelatase"/>
    <property type="match status" value="1"/>
</dbReference>
<dbReference type="InterPro" id="IPR001015">
    <property type="entry name" value="Ferrochelatase"/>
</dbReference>
<dbReference type="InterPro" id="IPR019772">
    <property type="entry name" value="Ferrochelatase_AS"/>
</dbReference>
<dbReference type="InterPro" id="IPR033644">
    <property type="entry name" value="Ferrochelatase_C"/>
</dbReference>
<dbReference type="InterPro" id="IPR033659">
    <property type="entry name" value="Ferrochelatase_N"/>
</dbReference>
<dbReference type="NCBIfam" id="TIGR00109">
    <property type="entry name" value="hemH"/>
    <property type="match status" value="1"/>
</dbReference>
<dbReference type="PANTHER" id="PTHR11108">
    <property type="entry name" value="FERROCHELATASE"/>
    <property type="match status" value="1"/>
</dbReference>
<dbReference type="PANTHER" id="PTHR11108:SF1">
    <property type="entry name" value="FERROCHELATASE, MITOCHONDRIAL"/>
    <property type="match status" value="1"/>
</dbReference>
<dbReference type="Pfam" id="PF00762">
    <property type="entry name" value="Ferrochelatase"/>
    <property type="match status" value="1"/>
</dbReference>
<dbReference type="SUPFAM" id="SSF53800">
    <property type="entry name" value="Chelatase"/>
    <property type="match status" value="1"/>
</dbReference>
<dbReference type="SUPFAM" id="SSF103511">
    <property type="entry name" value="Chlorophyll a-b binding protein"/>
    <property type="match status" value="1"/>
</dbReference>
<dbReference type="PROSITE" id="PS00534">
    <property type="entry name" value="FERROCHELATASE"/>
    <property type="match status" value="1"/>
</dbReference>
<sequence>MTRVGVLLMNLGGPERIKDVGPFLYNLFSDPEIIRLPLPIFQKPLAWFISTLRSSKSQKAYQAIGGGSPLRRITEQQARELQSALRNRGINATSYVAMRYWHPFTESAVEDIKADNINEVVVLPLYPHFSISTSGSSFRELRRLREVDKEFQKLSIRCIRSWFDNTGYIASMAELIEQEISSCESPNAAHICFTAHGVPKSYVEEAGDPYKDEIQDCALLIIDKVEKSLGFSNSYTLSYQSRVGPEEWLKPYTEEVLEELGANGVKELIVVPISFVSEHIETLQEIDIEYKKIALNNGIINFRRVKALDTYPLFINGLADLVASCLSGPEISLDEAAKLPEKVKLYPQEKWQWGWNNSAEVWNGRVAMFVFIICFFELVIGNGPLHYIGLL</sequence>
<evidence type="ECO:0000255" key="1">
    <source>
        <dbReference type="HAMAP-Rule" id="MF_00323"/>
    </source>
</evidence>
<comment type="function">
    <text evidence="1">Catalyzes the ferrous insertion into protoporphyrin IX.</text>
</comment>
<comment type="catalytic activity">
    <reaction evidence="1">
        <text>heme b + 2 H(+) = protoporphyrin IX + Fe(2+)</text>
        <dbReference type="Rhea" id="RHEA:22584"/>
        <dbReference type="ChEBI" id="CHEBI:15378"/>
        <dbReference type="ChEBI" id="CHEBI:29033"/>
        <dbReference type="ChEBI" id="CHEBI:57306"/>
        <dbReference type="ChEBI" id="CHEBI:60344"/>
        <dbReference type="EC" id="4.98.1.1"/>
    </reaction>
</comment>
<comment type="pathway">
    <text evidence="1">Porphyrin-containing compound metabolism; protoheme biosynthesis; protoheme from protoporphyrin-IX: step 1/1.</text>
</comment>
<comment type="subcellular location">
    <subcellularLocation>
        <location evidence="1">Cytoplasm</location>
    </subcellularLocation>
</comment>
<comment type="similarity">
    <text evidence="1">Belongs to the ferrochelatase family.</text>
</comment>
<reference key="1">
    <citation type="journal article" date="2003" name="Proc. Natl. Acad. Sci. U.S.A.">
        <title>Genome sequence of the cyanobacterium Prochlorococcus marinus SS120, a nearly minimal oxyphototrophic genome.</title>
        <authorList>
            <person name="Dufresne A."/>
            <person name="Salanoubat M."/>
            <person name="Partensky F."/>
            <person name="Artiguenave F."/>
            <person name="Axmann I.M."/>
            <person name="Barbe V."/>
            <person name="Duprat S."/>
            <person name="Galperin M.Y."/>
            <person name="Koonin E.V."/>
            <person name="Le Gall F."/>
            <person name="Makarova K.S."/>
            <person name="Ostrowski M."/>
            <person name="Oztas S."/>
            <person name="Robert C."/>
            <person name="Rogozin I.B."/>
            <person name="Scanlan D.J."/>
            <person name="Tandeau de Marsac N."/>
            <person name="Weissenbach J."/>
            <person name="Wincker P."/>
            <person name="Wolf Y.I."/>
            <person name="Hess W.R."/>
        </authorList>
    </citation>
    <scope>NUCLEOTIDE SEQUENCE [LARGE SCALE GENOMIC DNA]</scope>
    <source>
        <strain>SARG / CCMP1375 / SS120</strain>
    </source>
</reference>
<protein>
    <recommendedName>
        <fullName evidence="1">Ferrochelatase</fullName>
        <ecNumber evidence="1">4.98.1.1</ecNumber>
    </recommendedName>
    <alternativeName>
        <fullName evidence="1">Heme synthase</fullName>
    </alternativeName>
    <alternativeName>
        <fullName evidence="1">Protoheme ferro-lyase</fullName>
    </alternativeName>
</protein>
<accession>Q7VD58</accession>
<keyword id="KW-0963">Cytoplasm</keyword>
<keyword id="KW-0350">Heme biosynthesis</keyword>
<keyword id="KW-0408">Iron</keyword>
<keyword id="KW-0456">Lyase</keyword>
<keyword id="KW-0479">Metal-binding</keyword>
<keyword id="KW-0627">Porphyrin biosynthesis</keyword>
<keyword id="KW-1185">Reference proteome</keyword>
<gene>
    <name evidence="1" type="primary">hemH</name>
    <name type="ordered locus">Pro_0525</name>
</gene>